<dbReference type="EMBL" id="CP000034">
    <property type="protein sequence ID" value="ABB63469.1"/>
    <property type="molecule type" value="Genomic_DNA"/>
</dbReference>
<dbReference type="RefSeq" id="WP_000447529.1">
    <property type="nucleotide sequence ID" value="NC_007606.1"/>
</dbReference>
<dbReference type="RefSeq" id="YP_404960.1">
    <property type="nucleotide sequence ID" value="NC_007606.1"/>
</dbReference>
<dbReference type="SMR" id="Q32B36"/>
<dbReference type="STRING" id="300267.SDY_3491"/>
<dbReference type="EnsemblBacteria" id="ABB63469">
    <property type="protein sequence ID" value="ABB63469"/>
    <property type="gene ID" value="SDY_3491"/>
</dbReference>
<dbReference type="GeneID" id="93778672"/>
<dbReference type="KEGG" id="sdy:SDY_3491"/>
<dbReference type="PATRIC" id="fig|300267.13.peg.4144"/>
<dbReference type="HOGENOM" id="CLU_083987_3_3_6"/>
<dbReference type="PRO" id="PR:Q32B36"/>
<dbReference type="Proteomes" id="UP000002716">
    <property type="component" value="Chromosome"/>
</dbReference>
<dbReference type="GO" id="GO:0022625">
    <property type="term" value="C:cytosolic large ribosomal subunit"/>
    <property type="evidence" value="ECO:0007669"/>
    <property type="project" value="TreeGrafter"/>
</dbReference>
<dbReference type="GO" id="GO:0019843">
    <property type="term" value="F:rRNA binding"/>
    <property type="evidence" value="ECO:0007669"/>
    <property type="project" value="UniProtKB-UniRule"/>
</dbReference>
<dbReference type="GO" id="GO:0003735">
    <property type="term" value="F:structural constituent of ribosome"/>
    <property type="evidence" value="ECO:0007669"/>
    <property type="project" value="InterPro"/>
</dbReference>
<dbReference type="GO" id="GO:0006412">
    <property type="term" value="P:translation"/>
    <property type="evidence" value="ECO:0007669"/>
    <property type="project" value="UniProtKB-UniRule"/>
</dbReference>
<dbReference type="CDD" id="cd00336">
    <property type="entry name" value="Ribosomal_L22"/>
    <property type="match status" value="1"/>
</dbReference>
<dbReference type="FunFam" id="3.90.470.10:FF:000001">
    <property type="entry name" value="50S ribosomal protein L22"/>
    <property type="match status" value="1"/>
</dbReference>
<dbReference type="Gene3D" id="3.90.470.10">
    <property type="entry name" value="Ribosomal protein L22/L17"/>
    <property type="match status" value="1"/>
</dbReference>
<dbReference type="HAMAP" id="MF_01331_B">
    <property type="entry name" value="Ribosomal_uL22_B"/>
    <property type="match status" value="1"/>
</dbReference>
<dbReference type="InterPro" id="IPR001063">
    <property type="entry name" value="Ribosomal_uL22"/>
</dbReference>
<dbReference type="InterPro" id="IPR005727">
    <property type="entry name" value="Ribosomal_uL22_bac/chlpt-type"/>
</dbReference>
<dbReference type="InterPro" id="IPR047867">
    <property type="entry name" value="Ribosomal_uL22_bac/org-type"/>
</dbReference>
<dbReference type="InterPro" id="IPR018260">
    <property type="entry name" value="Ribosomal_uL22_CS"/>
</dbReference>
<dbReference type="InterPro" id="IPR036394">
    <property type="entry name" value="Ribosomal_uL22_sf"/>
</dbReference>
<dbReference type="NCBIfam" id="TIGR01044">
    <property type="entry name" value="rplV_bact"/>
    <property type="match status" value="1"/>
</dbReference>
<dbReference type="PANTHER" id="PTHR13501">
    <property type="entry name" value="CHLOROPLAST 50S RIBOSOMAL PROTEIN L22-RELATED"/>
    <property type="match status" value="1"/>
</dbReference>
<dbReference type="PANTHER" id="PTHR13501:SF8">
    <property type="entry name" value="LARGE RIBOSOMAL SUBUNIT PROTEIN UL22M"/>
    <property type="match status" value="1"/>
</dbReference>
<dbReference type="Pfam" id="PF00237">
    <property type="entry name" value="Ribosomal_L22"/>
    <property type="match status" value="1"/>
</dbReference>
<dbReference type="SUPFAM" id="SSF54843">
    <property type="entry name" value="Ribosomal protein L22"/>
    <property type="match status" value="1"/>
</dbReference>
<dbReference type="PROSITE" id="PS00464">
    <property type="entry name" value="RIBOSOMAL_L22"/>
    <property type="match status" value="1"/>
</dbReference>
<feature type="chain" id="PRO_0000243205" description="Large ribosomal subunit protein uL22">
    <location>
        <begin position="1"/>
        <end position="110"/>
    </location>
</feature>
<accession>Q32B36</accession>
<protein>
    <recommendedName>
        <fullName evidence="1">Large ribosomal subunit protein uL22</fullName>
    </recommendedName>
    <alternativeName>
        <fullName evidence="2">50S ribosomal protein L22</fullName>
    </alternativeName>
</protein>
<sequence>METIAKHRHARSSAQKVRLVADLIRGKKVSQALDILTYTNKKAAVLVKKVLESAIANAEHNDGADIDDLKVTKIFVDEGPSMKRIMPRAKGRADRILKRTSHITVVVSDR</sequence>
<name>RL22_SHIDS</name>
<evidence type="ECO:0000255" key="1">
    <source>
        <dbReference type="HAMAP-Rule" id="MF_01331"/>
    </source>
</evidence>
<evidence type="ECO:0000305" key="2"/>
<reference key="1">
    <citation type="journal article" date="2005" name="Nucleic Acids Res.">
        <title>Genome dynamics and diversity of Shigella species, the etiologic agents of bacillary dysentery.</title>
        <authorList>
            <person name="Yang F."/>
            <person name="Yang J."/>
            <person name="Zhang X."/>
            <person name="Chen L."/>
            <person name="Jiang Y."/>
            <person name="Yan Y."/>
            <person name="Tang X."/>
            <person name="Wang J."/>
            <person name="Xiong Z."/>
            <person name="Dong J."/>
            <person name="Xue Y."/>
            <person name="Zhu Y."/>
            <person name="Xu X."/>
            <person name="Sun L."/>
            <person name="Chen S."/>
            <person name="Nie H."/>
            <person name="Peng J."/>
            <person name="Xu J."/>
            <person name="Wang Y."/>
            <person name="Yuan Z."/>
            <person name="Wen Y."/>
            <person name="Yao Z."/>
            <person name="Shen Y."/>
            <person name="Qiang B."/>
            <person name="Hou Y."/>
            <person name="Yu J."/>
            <person name="Jin Q."/>
        </authorList>
    </citation>
    <scope>NUCLEOTIDE SEQUENCE [LARGE SCALE GENOMIC DNA]</scope>
    <source>
        <strain>Sd197</strain>
    </source>
</reference>
<keyword id="KW-1185">Reference proteome</keyword>
<keyword id="KW-0687">Ribonucleoprotein</keyword>
<keyword id="KW-0689">Ribosomal protein</keyword>
<keyword id="KW-0694">RNA-binding</keyword>
<keyword id="KW-0699">rRNA-binding</keyword>
<organism>
    <name type="scientific">Shigella dysenteriae serotype 1 (strain Sd197)</name>
    <dbReference type="NCBI Taxonomy" id="300267"/>
    <lineage>
        <taxon>Bacteria</taxon>
        <taxon>Pseudomonadati</taxon>
        <taxon>Pseudomonadota</taxon>
        <taxon>Gammaproteobacteria</taxon>
        <taxon>Enterobacterales</taxon>
        <taxon>Enterobacteriaceae</taxon>
        <taxon>Shigella</taxon>
    </lineage>
</organism>
<gene>
    <name evidence="1" type="primary">rplV</name>
    <name type="ordered locus">SDY_3491</name>
</gene>
<proteinExistence type="inferred from homology"/>
<comment type="function">
    <text evidence="1">This protein binds specifically to 23S rRNA; its binding is stimulated by other ribosomal proteins, e.g. L4, L17, and L20. It is important during the early stages of 50S assembly. It makes multiple contacts with different domains of the 23S rRNA in the assembled 50S subunit and ribosome (By similarity).</text>
</comment>
<comment type="function">
    <text evidence="1">The globular domain of the protein is located near the polypeptide exit tunnel on the outside of the subunit, while an extended beta-hairpin is found that lines the wall of the exit tunnel in the center of the 70S ribosome.</text>
</comment>
<comment type="subunit">
    <text evidence="1">Part of the 50S ribosomal subunit.</text>
</comment>
<comment type="similarity">
    <text evidence="1">Belongs to the universal ribosomal protein uL22 family.</text>
</comment>